<evidence type="ECO:0000255" key="1">
    <source>
        <dbReference type="HAMAP-Rule" id="MF_00405"/>
    </source>
</evidence>
<evidence type="ECO:0007829" key="2">
    <source>
        <dbReference type="PDB" id="3Q62"/>
    </source>
</evidence>
<keyword id="KW-0002">3D-structure</keyword>
<keyword id="KW-0963">Cytoplasm</keyword>
<keyword id="KW-0275">Fatty acid biosynthesis</keyword>
<keyword id="KW-0276">Fatty acid metabolism</keyword>
<keyword id="KW-0413">Isomerase</keyword>
<keyword id="KW-0444">Lipid biosynthesis</keyword>
<keyword id="KW-0443">Lipid metabolism</keyword>
<keyword id="KW-0456">Lyase</keyword>
<feature type="chain" id="PRO_0000091627" description="3-hydroxydecanoyl-[acyl-carrier-protein] dehydratase">
    <location>
        <begin position="1"/>
        <end position="172"/>
    </location>
</feature>
<feature type="active site" evidence="1">
    <location>
        <position position="71"/>
    </location>
</feature>
<feature type="helix" evidence="2">
    <location>
        <begin position="10"/>
        <end position="17"/>
    </location>
</feature>
<feature type="helix" evidence="2">
    <location>
        <begin position="32"/>
        <end position="34"/>
    </location>
</feature>
<feature type="strand" evidence="2">
    <location>
        <begin position="38"/>
        <end position="44"/>
    </location>
</feature>
<feature type="turn" evidence="2">
    <location>
        <begin position="48"/>
        <end position="51"/>
    </location>
</feature>
<feature type="strand" evidence="2">
    <location>
        <begin position="54"/>
        <end position="60"/>
    </location>
</feature>
<feature type="helix" evidence="2">
    <location>
        <begin position="66"/>
        <end position="70"/>
    </location>
</feature>
<feature type="helix" evidence="2">
    <location>
        <begin position="80"/>
        <end position="97"/>
    </location>
</feature>
<feature type="strand" evidence="2">
    <location>
        <begin position="102"/>
        <end position="110"/>
    </location>
</feature>
<feature type="strand" evidence="2">
    <location>
        <begin position="112"/>
        <end position="114"/>
    </location>
</feature>
<feature type="strand" evidence="2">
    <location>
        <begin position="124"/>
        <end position="135"/>
    </location>
</feature>
<feature type="strand" evidence="2">
    <location>
        <begin position="141"/>
        <end position="150"/>
    </location>
</feature>
<feature type="strand" evidence="2">
    <location>
        <begin position="153"/>
        <end position="167"/>
    </location>
</feature>
<sequence>MVDKRESYTKEDLEASGRGELFGAGGPPLPAGNMLMMDRIVKMIEDGGSHNKGYVEAELDINPDLWFFGCHFIGDPVMPGCLGLDAMWQLVGFYLGWLGGEGKGRALGVGEVKFTGQVLPDAKKVTYRINFKRVIMRKLIMGVADGEVLVDGKVIYTATDLKVGLFKDTNAF</sequence>
<reference key="1">
    <citation type="journal article" date="2004" name="Proc. Natl. Acad. Sci. U.S.A.">
        <title>Insights into the evolution of Yersinia pestis through whole-genome comparison with Yersinia pseudotuberculosis.</title>
        <authorList>
            <person name="Chain P.S.G."/>
            <person name="Carniel E."/>
            <person name="Larimer F.W."/>
            <person name="Lamerdin J."/>
            <person name="Stoutland P.O."/>
            <person name="Regala W.M."/>
            <person name="Georgescu A.M."/>
            <person name="Vergez L.M."/>
            <person name="Land M.L."/>
            <person name="Motin V.L."/>
            <person name="Brubaker R.R."/>
            <person name="Fowler J."/>
            <person name="Hinnebusch J."/>
            <person name="Marceau M."/>
            <person name="Medigue C."/>
            <person name="Simonet M."/>
            <person name="Chenal-Francisque V."/>
            <person name="Souza B."/>
            <person name="Dacheux D."/>
            <person name="Elliott J.M."/>
            <person name="Derbise A."/>
            <person name="Hauser L.J."/>
            <person name="Garcia E."/>
        </authorList>
    </citation>
    <scope>NUCLEOTIDE SEQUENCE [LARGE SCALE GENOMIC DNA]</scope>
    <source>
        <strain>IP32953</strain>
    </source>
</reference>
<comment type="function">
    <text evidence="1">Necessary for the introduction of cis unsaturation into fatty acids. Catalyzes the dehydration of (3R)-3-hydroxydecanoyl-ACP to E-(2)-decenoyl-ACP and then its isomerization to Z-(3)-decenoyl-ACP. Can catalyze the dehydratase reaction for beta-hydroxyacyl-ACPs with saturated chain lengths up to 16:0, being most active on intermediate chain length.</text>
</comment>
<comment type="catalytic activity">
    <reaction evidence="1">
        <text>a (3R)-hydroxyacyl-[ACP] = a (2E)-enoyl-[ACP] + H2O</text>
        <dbReference type="Rhea" id="RHEA:13097"/>
        <dbReference type="Rhea" id="RHEA-COMP:9925"/>
        <dbReference type="Rhea" id="RHEA-COMP:9945"/>
        <dbReference type="ChEBI" id="CHEBI:15377"/>
        <dbReference type="ChEBI" id="CHEBI:78784"/>
        <dbReference type="ChEBI" id="CHEBI:78827"/>
        <dbReference type="EC" id="4.2.1.59"/>
    </reaction>
</comment>
<comment type="catalytic activity">
    <reaction evidence="1">
        <text>(3R)-hydroxydecanoyl-[ACP] = (2E)-decenoyl-[ACP] + H2O</text>
        <dbReference type="Rhea" id="RHEA:41860"/>
        <dbReference type="Rhea" id="RHEA-COMP:9638"/>
        <dbReference type="Rhea" id="RHEA-COMP:9639"/>
        <dbReference type="ChEBI" id="CHEBI:15377"/>
        <dbReference type="ChEBI" id="CHEBI:78466"/>
        <dbReference type="ChEBI" id="CHEBI:78467"/>
    </reaction>
</comment>
<comment type="catalytic activity">
    <reaction evidence="1">
        <text>(2E)-decenoyl-[ACP] = (3Z)-decenoyl-[ACP]</text>
        <dbReference type="Rhea" id="RHEA:23568"/>
        <dbReference type="Rhea" id="RHEA-COMP:9639"/>
        <dbReference type="Rhea" id="RHEA-COMP:9927"/>
        <dbReference type="ChEBI" id="CHEBI:78467"/>
        <dbReference type="ChEBI" id="CHEBI:78798"/>
        <dbReference type="EC" id="5.3.3.14"/>
    </reaction>
</comment>
<comment type="pathway">
    <text evidence="1">Lipid metabolism; fatty acid biosynthesis.</text>
</comment>
<comment type="subunit">
    <text evidence="1">Homodimer.</text>
</comment>
<comment type="subcellular location">
    <subcellularLocation>
        <location evidence="1">Cytoplasm</location>
    </subcellularLocation>
</comment>
<comment type="similarity">
    <text evidence="1">Belongs to the thioester dehydratase family. FabA subfamily.</text>
</comment>
<gene>
    <name evidence="1" type="primary">fabA</name>
    <name type="ordered locus">YPTB1450</name>
</gene>
<organism>
    <name type="scientific">Yersinia pseudotuberculosis serotype I (strain IP32953)</name>
    <dbReference type="NCBI Taxonomy" id="273123"/>
    <lineage>
        <taxon>Bacteria</taxon>
        <taxon>Pseudomonadati</taxon>
        <taxon>Pseudomonadota</taxon>
        <taxon>Gammaproteobacteria</taxon>
        <taxon>Enterobacterales</taxon>
        <taxon>Yersiniaceae</taxon>
        <taxon>Yersinia</taxon>
    </lineage>
</organism>
<dbReference type="EC" id="4.2.1.59" evidence="1"/>
<dbReference type="EC" id="5.3.3.14" evidence="1"/>
<dbReference type="EMBL" id="BX936398">
    <property type="protein sequence ID" value="CAH20690.1"/>
    <property type="molecule type" value="Genomic_DNA"/>
</dbReference>
<dbReference type="RefSeq" id="WP_002220006.1">
    <property type="nucleotide sequence ID" value="NZ_CP009712.1"/>
</dbReference>
<dbReference type="PDB" id="3Q62">
    <property type="method" value="X-ray"/>
    <property type="resolution" value="1.40 A"/>
    <property type="chains" value="A/B=1-172"/>
</dbReference>
<dbReference type="PDBsum" id="3Q62"/>
<dbReference type="SMR" id="Q66CF3"/>
<dbReference type="GeneID" id="57977132"/>
<dbReference type="KEGG" id="ypo:BZ17_1068"/>
<dbReference type="KEGG" id="yps:YPTB1450"/>
<dbReference type="PATRIC" id="fig|273123.14.peg.1133"/>
<dbReference type="UniPathway" id="UPA00094"/>
<dbReference type="EvolutionaryTrace" id="Q66CF3"/>
<dbReference type="Proteomes" id="UP000001011">
    <property type="component" value="Chromosome"/>
</dbReference>
<dbReference type="GO" id="GO:0005737">
    <property type="term" value="C:cytoplasm"/>
    <property type="evidence" value="ECO:0007669"/>
    <property type="project" value="UniProtKB-SubCell"/>
</dbReference>
<dbReference type="GO" id="GO:0019171">
    <property type="term" value="F:(3R)-hydroxyacyl-[acyl-carrier-protein] dehydratase activity"/>
    <property type="evidence" value="ECO:0007669"/>
    <property type="project" value="UniProtKB-UniRule"/>
</dbReference>
<dbReference type="GO" id="GO:0034017">
    <property type="term" value="F:trans-2-decenoyl-acyl-carrier-protein isomerase activity"/>
    <property type="evidence" value="ECO:0007669"/>
    <property type="project" value="UniProtKB-UniRule"/>
</dbReference>
<dbReference type="GO" id="GO:0006636">
    <property type="term" value="P:unsaturated fatty acid biosynthetic process"/>
    <property type="evidence" value="ECO:0007669"/>
    <property type="project" value="UniProtKB-UniRule"/>
</dbReference>
<dbReference type="CDD" id="cd01287">
    <property type="entry name" value="FabA"/>
    <property type="match status" value="1"/>
</dbReference>
<dbReference type="FunFam" id="3.10.129.10:FF:000003">
    <property type="entry name" value="3-hydroxydecanoyl-[acyl-carrier-protein] dehydratase"/>
    <property type="match status" value="1"/>
</dbReference>
<dbReference type="Gene3D" id="3.10.129.10">
    <property type="entry name" value="Hotdog Thioesterase"/>
    <property type="match status" value="1"/>
</dbReference>
<dbReference type="HAMAP" id="MF_00405">
    <property type="entry name" value="FabA"/>
    <property type="match status" value="1"/>
</dbReference>
<dbReference type="InterPro" id="IPR010083">
    <property type="entry name" value="FabA"/>
</dbReference>
<dbReference type="InterPro" id="IPR013114">
    <property type="entry name" value="FabA_FabZ"/>
</dbReference>
<dbReference type="InterPro" id="IPR029069">
    <property type="entry name" value="HotDog_dom_sf"/>
</dbReference>
<dbReference type="NCBIfam" id="TIGR01749">
    <property type="entry name" value="fabA"/>
    <property type="match status" value="1"/>
</dbReference>
<dbReference type="NCBIfam" id="NF003509">
    <property type="entry name" value="PRK05174.1"/>
    <property type="match status" value="1"/>
</dbReference>
<dbReference type="PANTHER" id="PTHR30272">
    <property type="entry name" value="3-HYDROXYACYL-[ACYL-CARRIER-PROTEIN] DEHYDRATASE"/>
    <property type="match status" value="1"/>
</dbReference>
<dbReference type="PANTHER" id="PTHR30272:SF8">
    <property type="entry name" value="3-HYDROXYDECANOYL-[ACYL-CARRIER-PROTEIN] DEHYDRATASE"/>
    <property type="match status" value="1"/>
</dbReference>
<dbReference type="Pfam" id="PF07977">
    <property type="entry name" value="FabA"/>
    <property type="match status" value="1"/>
</dbReference>
<dbReference type="SUPFAM" id="SSF54637">
    <property type="entry name" value="Thioesterase/thiol ester dehydrase-isomerase"/>
    <property type="match status" value="1"/>
</dbReference>
<accession>Q66CF3</accession>
<protein>
    <recommendedName>
        <fullName evidence="1">3-hydroxydecanoyl-[acyl-carrier-protein] dehydratase</fullName>
        <ecNumber evidence="1">4.2.1.59</ecNumber>
    </recommendedName>
    <alternativeName>
        <fullName evidence="1">3-hydroxyacyl-[acyl-carrier-protein] dehydratase FabA</fullName>
    </alternativeName>
    <alternativeName>
        <fullName evidence="1">Beta-hydroxydecanoyl thioester dehydrase</fullName>
    </alternativeName>
    <alternativeName>
        <fullName evidence="1">Trans-2-decenoyl-[acyl-carrier-protein] isomerase</fullName>
        <ecNumber evidence="1">5.3.3.14</ecNumber>
    </alternativeName>
</protein>
<name>FABA_YERPS</name>
<proteinExistence type="evidence at protein level"/>